<evidence type="ECO:0000255" key="1"/>
<evidence type="ECO:0000255" key="2">
    <source>
        <dbReference type="PROSITE-ProRule" id="PRU00178"/>
    </source>
</evidence>
<evidence type="ECO:0000256" key="3">
    <source>
        <dbReference type="SAM" id="MobiDB-lite"/>
    </source>
</evidence>
<evidence type="ECO:0000305" key="4"/>
<feature type="chain" id="PRO_0000324158" description="RUN domain-containing protein 3A">
    <location>
        <begin position="1"/>
        <end position="428"/>
    </location>
</feature>
<feature type="domain" description="RUN" evidence="2">
    <location>
        <begin position="52"/>
        <end position="182"/>
    </location>
</feature>
<feature type="region of interest" description="Disordered" evidence="3">
    <location>
        <begin position="349"/>
        <end position="375"/>
    </location>
</feature>
<feature type="coiled-coil region" evidence="1">
    <location>
        <begin position="237"/>
        <end position="314"/>
    </location>
</feature>
<feature type="sequence conflict" description="In Ref. 2; AAH44502/AAH44540." evidence="4" ref="2">
    <original>M</original>
    <variation>L</variation>
    <location>
        <position position="12"/>
    </location>
</feature>
<feature type="sequence conflict" description="In Ref. 2; AAH44502/AAH44540." evidence="4" ref="2">
    <original>R</original>
    <variation>G</variation>
    <location>
        <position position="297"/>
    </location>
</feature>
<sequence length="428" mass="48476">MEQSFMQSAMAMGAQSKKGFSRSIAVERKNLITVCRFSVKTLLEKYTAEPIDDSSEEFINFAAILEHILSHRFKGSGSWFDGQRSFWDFIRLACSKVPNNCISSIENMENINSSRAKGRAWLRVALMEKRLSEYIATALRDSRTTRRFYDEGAIMLREEATVLTGMLIGLGAIDFSFCLKGEALDGKSEAVIDYTPYLKFTQSYDYLSDDEDGQSVDSSNSDDSVEHPYIPLVTDEESWRNKCRKMEQRFKIVNAQKGYLEELVRLRESQLKNVEMENKKLTAGLEELQQQSQKEKRELENIILELQEQLTSLIPGESHPLSKDLSIPLVNQWPSLQNYNNQEDSKLYHRGSFPSPEPHISLTTGSQRTERKQNGKSWCTAEKDYTPSMLGLCGSMSSLPSCKSLPSLRSTECLVNISAEPSPALTPS</sequence>
<reference key="1">
    <citation type="submission" date="2007-06" db="EMBL/GenBank/DDBJ databases">
        <title>A novel zebrafish homolog of Rap2ip is expressed both maternally and zygotically during embryonic development.</title>
        <authorList>
            <person name="Zhang Y."/>
            <person name="Zhang J."/>
            <person name="Wang W."/>
            <person name="Zhu S."/>
        </authorList>
    </citation>
    <scope>NUCLEOTIDE SEQUENCE [MRNA]</scope>
    <source>
        <strain>AB</strain>
    </source>
</reference>
<reference key="2">
    <citation type="submission" date="2007-12" db="EMBL/GenBank/DDBJ databases">
        <authorList>
            <consortium name="NIH - Zebrafish Gene Collection (ZGC) project"/>
        </authorList>
    </citation>
    <scope>NUCLEOTIDE SEQUENCE [LARGE SCALE MRNA]</scope>
    <source>
        <strain>AB</strain>
        <tissue>Embryo</tissue>
    </source>
</reference>
<accession>A7YDW0</accession>
<accession>Q7ZT23</accession>
<gene>
    <name type="primary">rundc3a</name>
    <name type="synonym">rap2ip</name>
    <name type="synonym">rap2ip1</name>
</gene>
<comment type="developmental stage">
    <text>Expressed both maternally and zygotically during embryonic development.</text>
</comment>
<comment type="similarity">
    <text evidence="4">Belongs to the RUNDC3 family.</text>
</comment>
<protein>
    <recommendedName>
        <fullName>RUN domain-containing protein 3A</fullName>
    </recommendedName>
    <alternativeName>
        <fullName>Rap2-interacting protein</fullName>
        <shortName>Rap2ip</shortName>
    </alternativeName>
</protein>
<dbReference type="EMBL" id="EF646262">
    <property type="protein sequence ID" value="ABU94270.1"/>
    <property type="molecule type" value="mRNA"/>
</dbReference>
<dbReference type="EMBL" id="BC044502">
    <property type="protein sequence ID" value="AAH44502.1"/>
    <property type="molecule type" value="mRNA"/>
</dbReference>
<dbReference type="EMBL" id="BC044540">
    <property type="protein sequence ID" value="AAH44540.1"/>
    <property type="molecule type" value="mRNA"/>
</dbReference>
<dbReference type="EMBL" id="BC155785">
    <property type="protein sequence ID" value="AAI55786.1"/>
    <property type="molecule type" value="mRNA"/>
</dbReference>
<dbReference type="RefSeq" id="NP_956443.1">
    <property type="nucleotide sequence ID" value="NM_200149.1"/>
</dbReference>
<dbReference type="SMR" id="A7YDW0"/>
<dbReference type="FunCoup" id="A7YDW0">
    <property type="interactions" value="782"/>
</dbReference>
<dbReference type="STRING" id="7955.ENSDARP00000106658"/>
<dbReference type="PaxDb" id="7955-ENSDARP00000106658"/>
<dbReference type="GeneID" id="393118"/>
<dbReference type="KEGG" id="dre:393118"/>
<dbReference type="AGR" id="ZFIN:ZDB-GENE-040426-842"/>
<dbReference type="CTD" id="393118"/>
<dbReference type="ZFIN" id="ZDB-GENE-040426-842">
    <property type="gene designation" value="rundc3ab"/>
</dbReference>
<dbReference type="eggNOG" id="KOG4381">
    <property type="taxonomic scope" value="Eukaryota"/>
</dbReference>
<dbReference type="InParanoid" id="A7YDW0"/>
<dbReference type="OrthoDB" id="10029904at2759"/>
<dbReference type="PhylomeDB" id="A7YDW0"/>
<dbReference type="PRO" id="PR:A7YDW0"/>
<dbReference type="Proteomes" id="UP000000437">
    <property type="component" value="Alternate scaffold 12"/>
</dbReference>
<dbReference type="Proteomes" id="UP000000437">
    <property type="component" value="Chromosome 12"/>
</dbReference>
<dbReference type="GO" id="GO:0010753">
    <property type="term" value="P:positive regulation of cGMP-mediated signaling"/>
    <property type="evidence" value="ECO:0000318"/>
    <property type="project" value="GO_Central"/>
</dbReference>
<dbReference type="FunFam" id="1.20.58.900:FF:000005">
    <property type="entry name" value="RUN domain-containing protein 3A isoform X1"/>
    <property type="match status" value="1"/>
</dbReference>
<dbReference type="Gene3D" id="1.20.58.900">
    <property type="match status" value="1"/>
</dbReference>
<dbReference type="InterPro" id="IPR004012">
    <property type="entry name" value="Run_dom"/>
</dbReference>
<dbReference type="InterPro" id="IPR037213">
    <property type="entry name" value="Run_dom_sf"/>
</dbReference>
<dbReference type="InterPro" id="IPR047340">
    <property type="entry name" value="RUNDC3A_B"/>
</dbReference>
<dbReference type="PANTHER" id="PTHR46251">
    <property type="entry name" value="RUN DOMAIN-CONTAINING 3 PROTEIN RUNDC3"/>
    <property type="match status" value="1"/>
</dbReference>
<dbReference type="PANTHER" id="PTHR46251:SF5">
    <property type="entry name" value="RUN DOMAIN-CONTAINING PROTEIN 3A"/>
    <property type="match status" value="1"/>
</dbReference>
<dbReference type="Pfam" id="PF02759">
    <property type="entry name" value="RUN"/>
    <property type="match status" value="1"/>
</dbReference>
<dbReference type="SMART" id="SM00593">
    <property type="entry name" value="RUN"/>
    <property type="match status" value="1"/>
</dbReference>
<dbReference type="SUPFAM" id="SSF140741">
    <property type="entry name" value="RUN domain-like"/>
    <property type="match status" value="1"/>
</dbReference>
<dbReference type="PROSITE" id="PS50826">
    <property type="entry name" value="RUN"/>
    <property type="match status" value="1"/>
</dbReference>
<name>RUN3A_DANRE</name>
<keyword id="KW-0175">Coiled coil</keyword>
<keyword id="KW-1185">Reference proteome</keyword>
<organism>
    <name type="scientific">Danio rerio</name>
    <name type="common">Zebrafish</name>
    <name type="synonym">Brachydanio rerio</name>
    <dbReference type="NCBI Taxonomy" id="7955"/>
    <lineage>
        <taxon>Eukaryota</taxon>
        <taxon>Metazoa</taxon>
        <taxon>Chordata</taxon>
        <taxon>Craniata</taxon>
        <taxon>Vertebrata</taxon>
        <taxon>Euteleostomi</taxon>
        <taxon>Actinopterygii</taxon>
        <taxon>Neopterygii</taxon>
        <taxon>Teleostei</taxon>
        <taxon>Ostariophysi</taxon>
        <taxon>Cypriniformes</taxon>
        <taxon>Danionidae</taxon>
        <taxon>Danioninae</taxon>
        <taxon>Danio</taxon>
    </lineage>
</organism>
<proteinExistence type="evidence at transcript level"/>